<name>Y3691_MYCTU</name>
<protein>
    <recommendedName>
        <fullName>Uncharacterized membrane protein Rv3691</fullName>
    </recommendedName>
</protein>
<gene>
    <name type="ordered locus">Rv3691</name>
</gene>
<reference key="1">
    <citation type="journal article" date="1998" name="Nature">
        <title>Deciphering the biology of Mycobacterium tuberculosis from the complete genome sequence.</title>
        <authorList>
            <person name="Cole S.T."/>
            <person name="Brosch R."/>
            <person name="Parkhill J."/>
            <person name="Garnier T."/>
            <person name="Churcher C.M."/>
            <person name="Harris D.E."/>
            <person name="Gordon S.V."/>
            <person name="Eiglmeier K."/>
            <person name="Gas S."/>
            <person name="Barry C.E. III"/>
            <person name="Tekaia F."/>
            <person name="Badcock K."/>
            <person name="Basham D."/>
            <person name="Brown D."/>
            <person name="Chillingworth T."/>
            <person name="Connor R."/>
            <person name="Davies R.M."/>
            <person name="Devlin K."/>
            <person name="Feltwell T."/>
            <person name="Gentles S."/>
            <person name="Hamlin N."/>
            <person name="Holroyd S."/>
            <person name="Hornsby T."/>
            <person name="Jagels K."/>
            <person name="Krogh A."/>
            <person name="McLean J."/>
            <person name="Moule S."/>
            <person name="Murphy L.D."/>
            <person name="Oliver S."/>
            <person name="Osborne J."/>
            <person name="Quail M.A."/>
            <person name="Rajandream M.A."/>
            <person name="Rogers J."/>
            <person name="Rutter S."/>
            <person name="Seeger K."/>
            <person name="Skelton S."/>
            <person name="Squares S."/>
            <person name="Squares R."/>
            <person name="Sulston J.E."/>
            <person name="Taylor K."/>
            <person name="Whitehead S."/>
            <person name="Barrell B.G."/>
        </authorList>
    </citation>
    <scope>NUCLEOTIDE SEQUENCE [LARGE SCALE GENOMIC DNA]</scope>
    <source>
        <strain>ATCC 25618 / H37Rv</strain>
    </source>
</reference>
<reference key="2">
    <citation type="journal article" date="2011" name="Mol. Cell. Proteomics">
        <title>Proteogenomic analysis of Mycobacterium tuberculosis by high resolution mass spectrometry.</title>
        <authorList>
            <person name="Kelkar D.S."/>
            <person name="Kumar D."/>
            <person name="Kumar P."/>
            <person name="Balakrishnan L."/>
            <person name="Muthusamy B."/>
            <person name="Yadav A.K."/>
            <person name="Shrivastava P."/>
            <person name="Marimuthu A."/>
            <person name="Anand S."/>
            <person name="Sundaram H."/>
            <person name="Kingsbury R."/>
            <person name="Harsha H.C."/>
            <person name="Nair B."/>
            <person name="Prasad T.S."/>
            <person name="Chauhan D.S."/>
            <person name="Katoch K."/>
            <person name="Katoch V.M."/>
            <person name="Kumar P."/>
            <person name="Chaerkady R."/>
            <person name="Ramachandran S."/>
            <person name="Dash D."/>
            <person name="Pandey A."/>
        </authorList>
    </citation>
    <scope>IDENTIFICATION BY MASS SPECTROMETRY [LARGE SCALE ANALYSIS]</scope>
    <source>
        <strain>ATCC 25618 / H37Rv</strain>
    </source>
</reference>
<accession>O69659</accession>
<accession>L0TGG4</accession>
<organism>
    <name type="scientific">Mycobacterium tuberculosis (strain ATCC 25618 / H37Rv)</name>
    <dbReference type="NCBI Taxonomy" id="83332"/>
    <lineage>
        <taxon>Bacteria</taxon>
        <taxon>Bacillati</taxon>
        <taxon>Actinomycetota</taxon>
        <taxon>Actinomycetes</taxon>
        <taxon>Mycobacteriales</taxon>
        <taxon>Mycobacteriaceae</taxon>
        <taxon>Mycobacterium</taxon>
        <taxon>Mycobacterium tuberculosis complex</taxon>
    </lineage>
</organism>
<evidence type="ECO:0000255" key="1"/>
<evidence type="ECO:0000305" key="2"/>
<proteinExistence type="evidence at protein level"/>
<dbReference type="EMBL" id="AL123456">
    <property type="protein sequence ID" value="CCP46515.1"/>
    <property type="status" value="ALT_INIT"/>
    <property type="molecule type" value="Genomic_DNA"/>
</dbReference>
<dbReference type="PIR" id="D70792">
    <property type="entry name" value="D70792"/>
</dbReference>
<dbReference type="RefSeq" id="NP_218208.1">
    <property type="nucleotide sequence ID" value="NC_000962.3"/>
</dbReference>
<dbReference type="RefSeq" id="WP_003419772.1">
    <property type="nucleotide sequence ID" value="NC_000962.3"/>
</dbReference>
<dbReference type="RefSeq" id="WP_003899642.1">
    <property type="nucleotide sequence ID" value="NZ_NVQJ01000028.1"/>
</dbReference>
<dbReference type="STRING" id="83332.Rv3691"/>
<dbReference type="PaxDb" id="83332-Rv3691"/>
<dbReference type="GeneID" id="885623"/>
<dbReference type="KEGG" id="mtu:Rv3691"/>
<dbReference type="PATRIC" id="fig|83332.12.peg.4114"/>
<dbReference type="TubercuList" id="Rv3691"/>
<dbReference type="eggNOG" id="ENOG502ZY4N">
    <property type="taxonomic scope" value="Bacteria"/>
</dbReference>
<dbReference type="InParanoid" id="O69659"/>
<dbReference type="OrthoDB" id="5241668at2"/>
<dbReference type="Proteomes" id="UP000001584">
    <property type="component" value="Chromosome"/>
</dbReference>
<dbReference type="GO" id="GO:0005886">
    <property type="term" value="C:plasma membrane"/>
    <property type="evidence" value="ECO:0007005"/>
    <property type="project" value="MTBBASE"/>
</dbReference>
<dbReference type="InterPro" id="IPR025646">
    <property type="entry name" value="DUF4350"/>
</dbReference>
<dbReference type="Pfam" id="PF14258">
    <property type="entry name" value="DUF4350"/>
    <property type="match status" value="1"/>
</dbReference>
<keyword id="KW-1003">Cell membrane</keyword>
<keyword id="KW-0472">Membrane</keyword>
<keyword id="KW-1185">Reference proteome</keyword>
<keyword id="KW-0812">Transmembrane</keyword>
<keyword id="KW-1133">Transmembrane helix</keyword>
<comment type="subcellular location">
    <subcellularLocation>
        <location evidence="2">Cell membrane</location>
        <topology evidence="2">Multi-pass membrane protein</topology>
    </subcellularLocation>
</comment>
<comment type="sequence caution" evidence="2">
    <conflict type="erroneous initiation">
        <sequence resource="EMBL-CDS" id="CCP46515"/>
    </conflict>
    <text>Truncated N-terminus.</text>
</comment>
<sequence>MGAGPVIPTRLATVRRRRPWRGVLLTLAAVAVVASIGTYLTAPRPGGAMAPASTSSTGGHALATLLGNHGVEVVVADSIADVEAAARPDSLLLVAQTQYLVDNALLDRLAKAPGDLLLVAPTSRTRTALTPQLRIAAASPFNSQPNCTLREANRAGSVQWGPSDTYQATGDLVLTSCYGGALVRFRAEGRTITVVGSSNFMTNGGLLPAGNAALAMNLAGNRPRLVWYAPDHIEGEMSSPSSLSDLIPENVHWTIWQLWLVVLLVALWKGRRIGPLVAEELPVVIRASETVEGRGRLYRSRRARDRAADALRTATLQRLRPRLGVGAGAPAPAVVTTIAQRSKADPPFVAYHLFGPAPATDNDLLQLARALDDIERQVTHS</sequence>
<feature type="chain" id="PRO_0000415511" description="Uncharacterized membrane protein Rv3691">
    <location>
        <begin position="1"/>
        <end position="381"/>
    </location>
</feature>
<feature type="transmembrane region" description="Helical" evidence="1">
    <location>
        <begin position="22"/>
        <end position="42"/>
    </location>
</feature>
<feature type="transmembrane region" description="Helical" evidence="1">
    <location>
        <begin position="246"/>
        <end position="266"/>
    </location>
</feature>